<gene>
    <name evidence="1" type="primary">metK</name>
    <name type="ordered locus">YPO0931</name>
    <name type="ordered locus">y3314</name>
    <name type="ordered locus">YP_3512</name>
</gene>
<comment type="function">
    <text evidence="1">Catalyzes the formation of S-adenosylmethionine (AdoMet) from methionine and ATP. The overall synthetic reaction is composed of two sequential steps, AdoMet formation and the subsequent tripolyphosphate hydrolysis which occurs prior to release of AdoMet from the enzyme.</text>
</comment>
<comment type="catalytic activity">
    <reaction evidence="1">
        <text>L-methionine + ATP + H2O = S-adenosyl-L-methionine + phosphate + diphosphate</text>
        <dbReference type="Rhea" id="RHEA:21080"/>
        <dbReference type="ChEBI" id="CHEBI:15377"/>
        <dbReference type="ChEBI" id="CHEBI:30616"/>
        <dbReference type="ChEBI" id="CHEBI:33019"/>
        <dbReference type="ChEBI" id="CHEBI:43474"/>
        <dbReference type="ChEBI" id="CHEBI:57844"/>
        <dbReference type="ChEBI" id="CHEBI:59789"/>
        <dbReference type="EC" id="2.5.1.6"/>
    </reaction>
</comment>
<comment type="cofactor">
    <cofactor evidence="1">
        <name>Mg(2+)</name>
        <dbReference type="ChEBI" id="CHEBI:18420"/>
    </cofactor>
    <text evidence="1">Binds 2 divalent ions per subunit.</text>
</comment>
<comment type="cofactor">
    <cofactor evidence="1">
        <name>K(+)</name>
        <dbReference type="ChEBI" id="CHEBI:29103"/>
    </cofactor>
    <text evidence="1">Binds 1 potassium ion per subunit.</text>
</comment>
<comment type="pathway">
    <text evidence="1">Amino-acid biosynthesis; S-adenosyl-L-methionine biosynthesis; S-adenosyl-L-methionine from L-methionine: step 1/1.</text>
</comment>
<comment type="subunit">
    <text evidence="1">Homotetramer; dimer of dimers.</text>
</comment>
<comment type="subcellular location">
    <subcellularLocation>
        <location evidence="1">Cytoplasm</location>
    </subcellularLocation>
</comment>
<comment type="similarity">
    <text evidence="1">Belongs to the AdoMet synthase family.</text>
</comment>
<proteinExistence type="inferred from homology"/>
<feature type="chain" id="PRO_0000174630" description="S-adenosylmethionine synthase">
    <location>
        <begin position="1"/>
        <end position="384"/>
    </location>
</feature>
<feature type="region of interest" description="Flexible loop" evidence="1">
    <location>
        <begin position="99"/>
        <end position="109"/>
    </location>
</feature>
<feature type="binding site" description="in other chain" evidence="1">
    <location>
        <position position="15"/>
    </location>
    <ligand>
        <name>ATP</name>
        <dbReference type="ChEBI" id="CHEBI:30616"/>
        <note>ligand shared between two neighboring subunits</note>
    </ligand>
</feature>
<feature type="binding site" evidence="1">
    <location>
        <position position="17"/>
    </location>
    <ligand>
        <name>Mg(2+)</name>
        <dbReference type="ChEBI" id="CHEBI:18420"/>
    </ligand>
</feature>
<feature type="binding site" evidence="1">
    <location>
        <position position="43"/>
    </location>
    <ligand>
        <name>K(+)</name>
        <dbReference type="ChEBI" id="CHEBI:29103"/>
    </ligand>
</feature>
<feature type="binding site" description="in other chain" evidence="1">
    <location>
        <position position="56"/>
    </location>
    <ligand>
        <name>L-methionine</name>
        <dbReference type="ChEBI" id="CHEBI:57844"/>
        <note>ligand shared between two neighboring subunits</note>
    </ligand>
</feature>
<feature type="binding site" description="in other chain" evidence="1">
    <location>
        <position position="99"/>
    </location>
    <ligand>
        <name>L-methionine</name>
        <dbReference type="ChEBI" id="CHEBI:57844"/>
        <note>ligand shared between two neighboring subunits</note>
    </ligand>
</feature>
<feature type="binding site" description="in other chain" evidence="1">
    <location>
        <begin position="164"/>
        <end position="166"/>
    </location>
    <ligand>
        <name>ATP</name>
        <dbReference type="ChEBI" id="CHEBI:30616"/>
        <note>ligand shared between two neighboring subunits</note>
    </ligand>
</feature>
<feature type="binding site" description="in other chain" evidence="1">
    <location>
        <begin position="230"/>
        <end position="231"/>
    </location>
    <ligand>
        <name>ATP</name>
        <dbReference type="ChEBI" id="CHEBI:30616"/>
        <note>ligand shared between two neighboring subunits</note>
    </ligand>
</feature>
<feature type="binding site" evidence="1">
    <location>
        <position position="239"/>
    </location>
    <ligand>
        <name>ATP</name>
        <dbReference type="ChEBI" id="CHEBI:30616"/>
        <note>ligand shared between two neighboring subunits</note>
    </ligand>
</feature>
<feature type="binding site" evidence="1">
    <location>
        <position position="239"/>
    </location>
    <ligand>
        <name>L-methionine</name>
        <dbReference type="ChEBI" id="CHEBI:57844"/>
        <note>ligand shared between two neighboring subunits</note>
    </ligand>
</feature>
<feature type="binding site" description="in other chain" evidence="1">
    <location>
        <begin position="245"/>
        <end position="246"/>
    </location>
    <ligand>
        <name>ATP</name>
        <dbReference type="ChEBI" id="CHEBI:30616"/>
        <note>ligand shared between two neighboring subunits</note>
    </ligand>
</feature>
<feature type="binding site" evidence="1">
    <location>
        <position position="262"/>
    </location>
    <ligand>
        <name>ATP</name>
        <dbReference type="ChEBI" id="CHEBI:30616"/>
        <note>ligand shared between two neighboring subunits</note>
    </ligand>
</feature>
<feature type="binding site" evidence="1">
    <location>
        <position position="266"/>
    </location>
    <ligand>
        <name>ATP</name>
        <dbReference type="ChEBI" id="CHEBI:30616"/>
        <note>ligand shared between two neighboring subunits</note>
    </ligand>
</feature>
<feature type="binding site" description="in other chain" evidence="1">
    <location>
        <position position="270"/>
    </location>
    <ligand>
        <name>L-methionine</name>
        <dbReference type="ChEBI" id="CHEBI:57844"/>
        <note>ligand shared between two neighboring subunits</note>
    </ligand>
</feature>
<organism>
    <name type="scientific">Yersinia pestis</name>
    <dbReference type="NCBI Taxonomy" id="632"/>
    <lineage>
        <taxon>Bacteria</taxon>
        <taxon>Pseudomonadati</taxon>
        <taxon>Pseudomonadota</taxon>
        <taxon>Gammaproteobacteria</taxon>
        <taxon>Enterobacterales</taxon>
        <taxon>Yersiniaceae</taxon>
        <taxon>Yersinia</taxon>
    </lineage>
</organism>
<keyword id="KW-0067">ATP-binding</keyword>
<keyword id="KW-0963">Cytoplasm</keyword>
<keyword id="KW-0460">Magnesium</keyword>
<keyword id="KW-0479">Metal-binding</keyword>
<keyword id="KW-0547">Nucleotide-binding</keyword>
<keyword id="KW-0554">One-carbon metabolism</keyword>
<keyword id="KW-0630">Potassium</keyword>
<keyword id="KW-1185">Reference proteome</keyword>
<keyword id="KW-0808">Transferase</keyword>
<dbReference type="EC" id="2.5.1.6" evidence="1"/>
<dbReference type="EMBL" id="AL590842">
    <property type="protein sequence ID" value="CAL19597.1"/>
    <property type="molecule type" value="Genomic_DNA"/>
</dbReference>
<dbReference type="EMBL" id="AE009952">
    <property type="protein sequence ID" value="AAM86864.1"/>
    <property type="molecule type" value="Genomic_DNA"/>
</dbReference>
<dbReference type="EMBL" id="AE017042">
    <property type="protein sequence ID" value="AAS63666.1"/>
    <property type="molecule type" value="Genomic_DNA"/>
</dbReference>
<dbReference type="PIR" id="AC0114">
    <property type="entry name" value="AC0114"/>
</dbReference>
<dbReference type="RefSeq" id="WP_002209971.1">
    <property type="nucleotide sequence ID" value="NZ_WUCM01000030.1"/>
</dbReference>
<dbReference type="RefSeq" id="YP_002345978.1">
    <property type="nucleotide sequence ID" value="NC_003143.1"/>
</dbReference>
<dbReference type="SMR" id="Q8ZHG7"/>
<dbReference type="IntAct" id="Q8ZHG7">
    <property type="interactions" value="8"/>
</dbReference>
<dbReference type="STRING" id="214092.YPO0931"/>
<dbReference type="PaxDb" id="214092-YPO0931"/>
<dbReference type="EnsemblBacteria" id="AAS63666">
    <property type="protein sequence ID" value="AAS63666"/>
    <property type="gene ID" value="YP_3512"/>
</dbReference>
<dbReference type="GeneID" id="57973710"/>
<dbReference type="KEGG" id="ype:YPO0931"/>
<dbReference type="KEGG" id="ypk:y3314"/>
<dbReference type="KEGG" id="ypm:YP_3512"/>
<dbReference type="PATRIC" id="fig|214092.21.peg.1208"/>
<dbReference type="eggNOG" id="COG0192">
    <property type="taxonomic scope" value="Bacteria"/>
</dbReference>
<dbReference type="HOGENOM" id="CLU_041802_1_1_6"/>
<dbReference type="OMA" id="ASYMARY"/>
<dbReference type="OrthoDB" id="9801686at2"/>
<dbReference type="UniPathway" id="UPA00315">
    <property type="reaction ID" value="UER00080"/>
</dbReference>
<dbReference type="Proteomes" id="UP000000815">
    <property type="component" value="Chromosome"/>
</dbReference>
<dbReference type="Proteomes" id="UP000001019">
    <property type="component" value="Chromosome"/>
</dbReference>
<dbReference type="Proteomes" id="UP000002490">
    <property type="component" value="Chromosome"/>
</dbReference>
<dbReference type="GO" id="GO:0005829">
    <property type="term" value="C:cytosol"/>
    <property type="evidence" value="ECO:0000318"/>
    <property type="project" value="GO_Central"/>
</dbReference>
<dbReference type="GO" id="GO:0005524">
    <property type="term" value="F:ATP binding"/>
    <property type="evidence" value="ECO:0007669"/>
    <property type="project" value="UniProtKB-UniRule"/>
</dbReference>
<dbReference type="GO" id="GO:0000287">
    <property type="term" value="F:magnesium ion binding"/>
    <property type="evidence" value="ECO:0007669"/>
    <property type="project" value="UniProtKB-UniRule"/>
</dbReference>
<dbReference type="GO" id="GO:0004478">
    <property type="term" value="F:methionine adenosyltransferase activity"/>
    <property type="evidence" value="ECO:0000318"/>
    <property type="project" value="GO_Central"/>
</dbReference>
<dbReference type="GO" id="GO:0006730">
    <property type="term" value="P:one-carbon metabolic process"/>
    <property type="evidence" value="ECO:0007669"/>
    <property type="project" value="UniProtKB-KW"/>
</dbReference>
<dbReference type="GO" id="GO:0006556">
    <property type="term" value="P:S-adenosylmethionine biosynthetic process"/>
    <property type="evidence" value="ECO:0000318"/>
    <property type="project" value="GO_Central"/>
</dbReference>
<dbReference type="CDD" id="cd18079">
    <property type="entry name" value="S-AdoMet_synt"/>
    <property type="match status" value="1"/>
</dbReference>
<dbReference type="FunFam" id="3.30.300.10:FF:000001">
    <property type="entry name" value="S-adenosylmethionine synthase"/>
    <property type="match status" value="1"/>
</dbReference>
<dbReference type="FunFam" id="3.30.300.10:FF:000003">
    <property type="entry name" value="S-adenosylmethionine synthase"/>
    <property type="match status" value="1"/>
</dbReference>
<dbReference type="Gene3D" id="3.30.300.10">
    <property type="match status" value="3"/>
</dbReference>
<dbReference type="HAMAP" id="MF_00086">
    <property type="entry name" value="S_AdoMet_synth1"/>
    <property type="match status" value="1"/>
</dbReference>
<dbReference type="InterPro" id="IPR022631">
    <property type="entry name" value="ADOMET_SYNTHASE_CS"/>
</dbReference>
<dbReference type="InterPro" id="IPR022630">
    <property type="entry name" value="S-AdoMet_synt_C"/>
</dbReference>
<dbReference type="InterPro" id="IPR022629">
    <property type="entry name" value="S-AdoMet_synt_central"/>
</dbReference>
<dbReference type="InterPro" id="IPR022628">
    <property type="entry name" value="S-AdoMet_synt_N"/>
</dbReference>
<dbReference type="InterPro" id="IPR002133">
    <property type="entry name" value="S-AdoMet_synthetase"/>
</dbReference>
<dbReference type="InterPro" id="IPR022636">
    <property type="entry name" value="S-AdoMet_synthetase_sfam"/>
</dbReference>
<dbReference type="NCBIfam" id="TIGR01034">
    <property type="entry name" value="metK"/>
    <property type="match status" value="1"/>
</dbReference>
<dbReference type="PANTHER" id="PTHR11964">
    <property type="entry name" value="S-ADENOSYLMETHIONINE SYNTHETASE"/>
    <property type="match status" value="1"/>
</dbReference>
<dbReference type="Pfam" id="PF02773">
    <property type="entry name" value="S-AdoMet_synt_C"/>
    <property type="match status" value="1"/>
</dbReference>
<dbReference type="Pfam" id="PF02772">
    <property type="entry name" value="S-AdoMet_synt_M"/>
    <property type="match status" value="1"/>
</dbReference>
<dbReference type="Pfam" id="PF00438">
    <property type="entry name" value="S-AdoMet_synt_N"/>
    <property type="match status" value="1"/>
</dbReference>
<dbReference type="PIRSF" id="PIRSF000497">
    <property type="entry name" value="MAT"/>
    <property type="match status" value="1"/>
</dbReference>
<dbReference type="SUPFAM" id="SSF55973">
    <property type="entry name" value="S-adenosylmethionine synthetase"/>
    <property type="match status" value="3"/>
</dbReference>
<dbReference type="PROSITE" id="PS00376">
    <property type="entry name" value="ADOMET_SYNTHASE_1"/>
    <property type="match status" value="1"/>
</dbReference>
<dbReference type="PROSITE" id="PS00377">
    <property type="entry name" value="ADOMET_SYNTHASE_2"/>
    <property type="match status" value="1"/>
</dbReference>
<name>METK_YERPE</name>
<reference key="1">
    <citation type="journal article" date="2001" name="Nature">
        <title>Genome sequence of Yersinia pestis, the causative agent of plague.</title>
        <authorList>
            <person name="Parkhill J."/>
            <person name="Wren B.W."/>
            <person name="Thomson N.R."/>
            <person name="Titball R.W."/>
            <person name="Holden M.T.G."/>
            <person name="Prentice M.B."/>
            <person name="Sebaihia M."/>
            <person name="James K.D."/>
            <person name="Churcher C.M."/>
            <person name="Mungall K.L."/>
            <person name="Baker S."/>
            <person name="Basham D."/>
            <person name="Bentley S.D."/>
            <person name="Brooks K."/>
            <person name="Cerdeno-Tarraga A.-M."/>
            <person name="Chillingworth T."/>
            <person name="Cronin A."/>
            <person name="Davies R.M."/>
            <person name="Davis P."/>
            <person name="Dougan G."/>
            <person name="Feltwell T."/>
            <person name="Hamlin N."/>
            <person name="Holroyd S."/>
            <person name="Jagels K."/>
            <person name="Karlyshev A.V."/>
            <person name="Leather S."/>
            <person name="Moule S."/>
            <person name="Oyston P.C.F."/>
            <person name="Quail M.A."/>
            <person name="Rutherford K.M."/>
            <person name="Simmonds M."/>
            <person name="Skelton J."/>
            <person name="Stevens K."/>
            <person name="Whitehead S."/>
            <person name="Barrell B.G."/>
        </authorList>
    </citation>
    <scope>NUCLEOTIDE SEQUENCE [LARGE SCALE GENOMIC DNA]</scope>
    <source>
        <strain>CO-92 / Biovar Orientalis</strain>
    </source>
</reference>
<reference key="2">
    <citation type="journal article" date="2002" name="J. Bacteriol.">
        <title>Genome sequence of Yersinia pestis KIM.</title>
        <authorList>
            <person name="Deng W."/>
            <person name="Burland V."/>
            <person name="Plunkett G. III"/>
            <person name="Boutin A."/>
            <person name="Mayhew G.F."/>
            <person name="Liss P."/>
            <person name="Perna N.T."/>
            <person name="Rose D.J."/>
            <person name="Mau B."/>
            <person name="Zhou S."/>
            <person name="Schwartz D.C."/>
            <person name="Fetherston J.D."/>
            <person name="Lindler L.E."/>
            <person name="Brubaker R.R."/>
            <person name="Plano G.V."/>
            <person name="Straley S.C."/>
            <person name="McDonough K.A."/>
            <person name="Nilles M.L."/>
            <person name="Matson J.S."/>
            <person name="Blattner F.R."/>
            <person name="Perry R.D."/>
        </authorList>
    </citation>
    <scope>NUCLEOTIDE SEQUENCE [LARGE SCALE GENOMIC DNA]</scope>
    <source>
        <strain>KIM10+ / Biovar Mediaevalis</strain>
    </source>
</reference>
<reference key="3">
    <citation type="journal article" date="2004" name="DNA Res.">
        <title>Complete genome sequence of Yersinia pestis strain 91001, an isolate avirulent to humans.</title>
        <authorList>
            <person name="Song Y."/>
            <person name="Tong Z."/>
            <person name="Wang J."/>
            <person name="Wang L."/>
            <person name="Guo Z."/>
            <person name="Han Y."/>
            <person name="Zhang J."/>
            <person name="Pei D."/>
            <person name="Zhou D."/>
            <person name="Qin H."/>
            <person name="Pang X."/>
            <person name="Han Y."/>
            <person name="Zhai J."/>
            <person name="Li M."/>
            <person name="Cui B."/>
            <person name="Qi Z."/>
            <person name="Jin L."/>
            <person name="Dai R."/>
            <person name="Chen F."/>
            <person name="Li S."/>
            <person name="Ye C."/>
            <person name="Du Z."/>
            <person name="Lin W."/>
            <person name="Wang J."/>
            <person name="Yu J."/>
            <person name="Yang H."/>
            <person name="Wang J."/>
            <person name="Huang P."/>
            <person name="Yang R."/>
        </authorList>
    </citation>
    <scope>NUCLEOTIDE SEQUENCE [LARGE SCALE GENOMIC DNA]</scope>
    <source>
        <strain>91001 / Biovar Mediaevalis</strain>
    </source>
</reference>
<protein>
    <recommendedName>
        <fullName evidence="1">S-adenosylmethionine synthase</fullName>
        <shortName evidence="1">AdoMet synthase</shortName>
        <ecNumber evidence="1">2.5.1.6</ecNumber>
    </recommendedName>
    <alternativeName>
        <fullName evidence="1">MAT</fullName>
    </alternativeName>
    <alternativeName>
        <fullName evidence="1">Methionine adenosyltransferase</fullName>
    </alternativeName>
</protein>
<sequence>MAKHLFTSESVSEGHPDKIADQISDAVLDAILEQDPKARVACETYVKTGMVLVGGEVTTNAWVDIEEITRRTIREIGYVHSDMGFDANSCAVLSAIGKQSPDINQGVDRENPLEQGAGDQGLMFGYATNETSVLMPAPITYAHRLVERQAEVRKNGALPWLRPDAKSQVTFQYDDGKIVGIDAVVLSTQHSEDINQKDLHEAVMEEIIKPVLPAEWITAHTKYFINPTGRFVIGGPMGDCGLTGRKIIVDTYGGMARHGGGAFSGKDPSKVDRSAAYAARYVAKNIVAAGLADRCEIQVSYAIGVAEPTSIMVEAFGTEKIPADQLTLLVREFFDLRPYGLIKMLDLLHPIYRETAAYGHFGREHFPWEKTDKAALLRDAAGLK</sequence>
<evidence type="ECO:0000255" key="1">
    <source>
        <dbReference type="HAMAP-Rule" id="MF_00086"/>
    </source>
</evidence>
<accession>Q8ZHG7</accession>
<accession>Q0WIB0</accession>